<dbReference type="EMBL" id="BX936398">
    <property type="protein sequence ID" value="CAH20342.1"/>
    <property type="molecule type" value="Genomic_DNA"/>
</dbReference>
<dbReference type="RefSeq" id="WP_002210332.1">
    <property type="nucleotide sequence ID" value="NZ_CP009712.1"/>
</dbReference>
<dbReference type="SMR" id="Q66DE4"/>
<dbReference type="GeneID" id="57976086"/>
<dbReference type="KEGG" id="ypo:BZ17_1441"/>
<dbReference type="KEGG" id="yps:YPTB1102"/>
<dbReference type="PATRIC" id="fig|273123.14.peg.1525"/>
<dbReference type="Proteomes" id="UP000001011">
    <property type="component" value="Chromosome"/>
</dbReference>
<dbReference type="GO" id="GO:0009279">
    <property type="term" value="C:cell outer membrane"/>
    <property type="evidence" value="ECO:0007669"/>
    <property type="project" value="UniProtKB-SubCell"/>
</dbReference>
<dbReference type="GO" id="GO:1990351">
    <property type="term" value="C:transporter complex"/>
    <property type="evidence" value="ECO:0007669"/>
    <property type="project" value="TreeGrafter"/>
</dbReference>
<dbReference type="GO" id="GO:0001530">
    <property type="term" value="F:lipopolysaccharide binding"/>
    <property type="evidence" value="ECO:0007669"/>
    <property type="project" value="TreeGrafter"/>
</dbReference>
<dbReference type="GO" id="GO:0043165">
    <property type="term" value="P:Gram-negative-bacterium-type cell outer membrane assembly"/>
    <property type="evidence" value="ECO:0007669"/>
    <property type="project" value="UniProtKB-UniRule"/>
</dbReference>
<dbReference type="GO" id="GO:0015920">
    <property type="term" value="P:lipopolysaccharide transport"/>
    <property type="evidence" value="ECO:0007669"/>
    <property type="project" value="TreeGrafter"/>
</dbReference>
<dbReference type="Gene3D" id="3.30.160.150">
    <property type="entry name" value="Lipoprotein like domain"/>
    <property type="match status" value="1"/>
</dbReference>
<dbReference type="HAMAP" id="MF_01186">
    <property type="entry name" value="LPS_assembly_LptE"/>
    <property type="match status" value="1"/>
</dbReference>
<dbReference type="InterPro" id="IPR007485">
    <property type="entry name" value="LPS_assembly_LptE"/>
</dbReference>
<dbReference type="NCBIfam" id="NF008062">
    <property type="entry name" value="PRK10796.1"/>
    <property type="match status" value="1"/>
</dbReference>
<dbReference type="PANTHER" id="PTHR38098">
    <property type="entry name" value="LPS-ASSEMBLY LIPOPROTEIN LPTE"/>
    <property type="match status" value="1"/>
</dbReference>
<dbReference type="PANTHER" id="PTHR38098:SF1">
    <property type="entry name" value="LPS-ASSEMBLY LIPOPROTEIN LPTE"/>
    <property type="match status" value="1"/>
</dbReference>
<dbReference type="Pfam" id="PF04390">
    <property type="entry name" value="LptE"/>
    <property type="match status" value="1"/>
</dbReference>
<dbReference type="PROSITE" id="PS51257">
    <property type="entry name" value="PROKAR_LIPOPROTEIN"/>
    <property type="match status" value="1"/>
</dbReference>
<name>LPTE_YERPS</name>
<gene>
    <name evidence="1" type="primary">lptE</name>
    <name type="synonym">rlpB</name>
    <name type="ordered locus">YPTB1102</name>
</gene>
<organism>
    <name type="scientific">Yersinia pseudotuberculosis serotype I (strain IP32953)</name>
    <dbReference type="NCBI Taxonomy" id="273123"/>
    <lineage>
        <taxon>Bacteria</taxon>
        <taxon>Pseudomonadati</taxon>
        <taxon>Pseudomonadota</taxon>
        <taxon>Gammaproteobacteria</taxon>
        <taxon>Enterobacterales</taxon>
        <taxon>Yersiniaceae</taxon>
        <taxon>Yersinia</taxon>
    </lineage>
</organism>
<feature type="signal peptide" evidence="1">
    <location>
        <begin position="1"/>
        <end position="19"/>
    </location>
</feature>
<feature type="chain" id="PRO_5000098529" description="LPS-assembly lipoprotein LptE">
    <location>
        <begin position="20"/>
        <end position="207"/>
    </location>
</feature>
<feature type="region of interest" description="Disordered" evidence="2">
    <location>
        <begin position="168"/>
        <end position="207"/>
    </location>
</feature>
<feature type="compositionally biased region" description="Polar residues" evidence="2">
    <location>
        <begin position="182"/>
        <end position="207"/>
    </location>
</feature>
<feature type="lipid moiety-binding region" description="N-palmitoyl cysteine" evidence="1">
    <location>
        <position position="20"/>
    </location>
</feature>
<feature type="lipid moiety-binding region" description="S-diacylglycerol cysteine" evidence="1">
    <location>
        <position position="20"/>
    </location>
</feature>
<keyword id="KW-0998">Cell outer membrane</keyword>
<keyword id="KW-0449">Lipoprotein</keyword>
<keyword id="KW-0472">Membrane</keyword>
<keyword id="KW-0564">Palmitate</keyword>
<keyword id="KW-0732">Signal</keyword>
<comment type="function">
    <text evidence="1">Together with LptD, is involved in the assembly of lipopolysaccharide (LPS) at the surface of the outer membrane. Required for the proper assembly of LptD. Binds LPS and may serve as the LPS recognition site at the outer membrane.</text>
</comment>
<comment type="subunit">
    <text evidence="1">Component of the lipopolysaccharide transport and assembly complex. Interacts with LptD.</text>
</comment>
<comment type="subcellular location">
    <subcellularLocation>
        <location evidence="1">Cell outer membrane</location>
        <topology evidence="1">Lipid-anchor</topology>
    </subcellularLocation>
</comment>
<comment type="similarity">
    <text evidence="1">Belongs to the LptE lipoprotein family.</text>
</comment>
<reference key="1">
    <citation type="journal article" date="2004" name="Proc. Natl. Acad. Sci. U.S.A.">
        <title>Insights into the evolution of Yersinia pestis through whole-genome comparison with Yersinia pseudotuberculosis.</title>
        <authorList>
            <person name="Chain P.S.G."/>
            <person name="Carniel E."/>
            <person name="Larimer F.W."/>
            <person name="Lamerdin J."/>
            <person name="Stoutland P.O."/>
            <person name="Regala W.M."/>
            <person name="Georgescu A.M."/>
            <person name="Vergez L.M."/>
            <person name="Land M.L."/>
            <person name="Motin V.L."/>
            <person name="Brubaker R.R."/>
            <person name="Fowler J."/>
            <person name="Hinnebusch J."/>
            <person name="Marceau M."/>
            <person name="Medigue C."/>
            <person name="Simonet M."/>
            <person name="Chenal-Francisque V."/>
            <person name="Souza B."/>
            <person name="Dacheux D."/>
            <person name="Elliott J.M."/>
            <person name="Derbise A."/>
            <person name="Hauser L.J."/>
            <person name="Garcia E."/>
        </authorList>
    </citation>
    <scope>NUCLEOTIDE SEQUENCE [LARGE SCALE GENOMIC DNA]</scope>
    <source>
        <strain>IP32953</strain>
    </source>
</reference>
<protein>
    <recommendedName>
        <fullName evidence="1">LPS-assembly lipoprotein LptE</fullName>
    </recommendedName>
</protein>
<sequence>MRHRILTLLLGLAVLVTAGCGFNLRGTTQVPTELQKLLLESSDPYGPLARSIRQQLRLNNVTIVDDAMRKDIPTLRIIGSSESQETVSIFRNGVAAENQLVLHVQAQVLIPGHDIYPLQVNVFRTFFDNPLTALAKEAEAEVLRQEMREQAAQQLVRQLLTVHAAEVKNTQKNGDKPVSDANAAQGSTPTAVNETTLGEPAVSTSAK</sequence>
<accession>Q66DE4</accession>
<proteinExistence type="inferred from homology"/>
<evidence type="ECO:0000255" key="1">
    <source>
        <dbReference type="HAMAP-Rule" id="MF_01186"/>
    </source>
</evidence>
<evidence type="ECO:0000256" key="2">
    <source>
        <dbReference type="SAM" id="MobiDB-lite"/>
    </source>
</evidence>